<feature type="signal peptide" evidence="1">
    <location>
        <begin position="1"/>
        <end position="19"/>
    </location>
</feature>
<feature type="chain" id="PRO_0000277890" description="17 kDa surface antigen">
    <location>
        <begin position="20"/>
        <end position="159"/>
    </location>
</feature>
<feature type="lipid moiety-binding region" description="N-palmitoyl cysteine" evidence="2">
    <location>
        <position position="20"/>
    </location>
</feature>
<feature type="lipid moiety-binding region" description="S-diacylglycerol cysteine" evidence="2">
    <location>
        <position position="20"/>
    </location>
</feature>
<sequence length="159" mass="16331">MKIISKIIVILLAASMLQACQGPGGMNKQGSGTLIGGTAGALLGSQFGGGTGRLAAVGAGALLGAILGNQIGAGMDEQDRKLAELTSQRALEAAPSGSSVQWRNPDNGNYGTVTPSKAYKNNTGQYCREYTQTVVVGGKQQKAYGTACRQPDGQWQVVN</sequence>
<gene>
    <name type="primary">omp</name>
</gene>
<accession>Q84I68</accession>
<keyword id="KW-0998">Cell outer membrane</keyword>
<keyword id="KW-0449">Lipoprotein</keyword>
<keyword id="KW-0472">Membrane</keyword>
<keyword id="KW-0564">Palmitate</keyword>
<keyword id="KW-0732">Signal</keyword>
<comment type="subcellular location">
    <subcellularLocation>
        <location evidence="2">Cell outer membrane</location>
        <topology evidence="2">Lipid-anchor</topology>
    </subcellularLocation>
</comment>
<comment type="similarity">
    <text evidence="2">Belongs to the rickettsiale 17 kDa surface antigen family.</text>
</comment>
<proteinExistence type="inferred from homology"/>
<reference key="1">
    <citation type="submission" date="2001-11" db="EMBL/GenBank/DDBJ databases">
        <title>Classification of Rickettsia amblyommii sp. nov. isolated from the Lone Star Tick, Amblyomma americanum (Acari: Ixodidae), based upon 17, 120 and 130 kilodalton antigen gene phylogenies.</title>
        <authorList>
            <person name="Stothard D.R."/>
            <person name="Pretzman C.I."/>
            <person name="Fuerst P.A."/>
            <person name="Feng H.-M."/>
            <person name="Walker D.H."/>
            <person name="Bouyer D.H."/>
        </authorList>
    </citation>
    <scope>NUCLEOTIDE SEQUENCE [GENOMIC DNA]</scope>
    <source>
        <strain>G2D42</strain>
    </source>
</reference>
<dbReference type="EMBL" id="AF445380">
    <property type="protein sequence ID" value="AAO38433.1"/>
    <property type="molecule type" value="Genomic_DNA"/>
</dbReference>
<dbReference type="OMA" id="NCRQYTH"/>
<dbReference type="GO" id="GO:0009279">
    <property type="term" value="C:cell outer membrane"/>
    <property type="evidence" value="ECO:0007669"/>
    <property type="project" value="UniProtKB-SubCell"/>
</dbReference>
<dbReference type="InterPro" id="IPR032635">
    <property type="entry name" value="Anti_2"/>
</dbReference>
<dbReference type="InterPro" id="IPR051407">
    <property type="entry name" value="Bact_OM_lipoprot/Surf_antigen"/>
</dbReference>
<dbReference type="InterPro" id="IPR008816">
    <property type="entry name" value="Gly_zipper_2TM_dom"/>
</dbReference>
<dbReference type="InterPro" id="IPR016364">
    <property type="entry name" value="Surface_antigen_Rickettsia"/>
</dbReference>
<dbReference type="PANTHER" id="PTHR35603">
    <property type="match status" value="1"/>
</dbReference>
<dbReference type="PANTHER" id="PTHR35603:SF2">
    <property type="entry name" value="OUTER MEMBRANE LIPOPROTEIN"/>
    <property type="match status" value="1"/>
</dbReference>
<dbReference type="Pfam" id="PF16998">
    <property type="entry name" value="17kDa_Anti_2"/>
    <property type="match status" value="1"/>
</dbReference>
<dbReference type="Pfam" id="PF05433">
    <property type="entry name" value="Rick_17kDa_Anti"/>
    <property type="match status" value="1"/>
</dbReference>
<dbReference type="PIRSF" id="PIRSF002721">
    <property type="entry name" value="Surface_antigen_Rickettsia"/>
    <property type="match status" value="1"/>
</dbReference>
<dbReference type="PROSITE" id="PS51257">
    <property type="entry name" value="PROKAR_LIPOPROTEIN"/>
    <property type="match status" value="1"/>
</dbReference>
<protein>
    <recommendedName>
        <fullName>17 kDa surface antigen</fullName>
    </recommendedName>
</protein>
<name>17KD_RICBE</name>
<evidence type="ECO:0000255" key="1">
    <source>
        <dbReference type="PROSITE-ProRule" id="PRU00303"/>
    </source>
</evidence>
<evidence type="ECO:0000305" key="2"/>
<organism>
    <name type="scientific">Rickettsia bellii</name>
    <dbReference type="NCBI Taxonomy" id="33990"/>
    <lineage>
        <taxon>Bacteria</taxon>
        <taxon>Pseudomonadati</taxon>
        <taxon>Pseudomonadota</taxon>
        <taxon>Alphaproteobacteria</taxon>
        <taxon>Rickettsiales</taxon>
        <taxon>Rickettsiaceae</taxon>
        <taxon>Rickettsieae</taxon>
        <taxon>Rickettsia</taxon>
        <taxon>belli group</taxon>
    </lineage>
</organism>